<proteinExistence type="inferred from homology"/>
<keyword id="KW-0004">4Fe-4S</keyword>
<keyword id="KW-0408">Iron</keyword>
<keyword id="KW-0411">Iron-sulfur</keyword>
<keyword id="KW-0456">Lyase</keyword>
<keyword id="KW-0479">Metal-binding</keyword>
<keyword id="KW-1185">Reference proteome</keyword>
<keyword id="KW-0949">S-adenosyl-L-methionine</keyword>
<keyword id="KW-0784">Thiamine biosynthesis</keyword>
<keyword id="KW-0862">Zinc</keyword>
<sequence>MAKTNLSVDAADLTSRITRTPFPGSRKIYIEGSRPDIRVPFREVTLTDTLVAEGSETRREANPPLRLFDSSGVYTDPAASIDITRGLSPLRGAWINERQDTEALPGISSAYGRERLNDPALSALRMAHAPVPRRAKAGANVSQMHYARQGIITPEMEYIAIRENLVRAQLAERLATERVPKTGHSFGASIPKDITAEFVRDEVARGRAVIPNNINHPETEPMIIGRNFLIKVNANIGNSAVTSSIEEEVDKLAWSIRWGADTVMDLSTGENIHETREWILRNSPVPIGTVPIYQALEKVNGKAEDLTWEIFRDTLIEQAEQGVDYFTIHAGVRLAYVPLTANRLTGIVSRGGSIMAKWCLSHHKESFLYEHFEEICEIMKAYDVCFSLGDGLRPGSIADANDEAQFAELHTLGELTQIAWKHDVQVMIEGPGHVPLQLVKENVEKQLEACFEAPFYTLGPLITDISPGYDHISSAMGAANIGWYGTAMLCYVTPKEHLGLPNRDDVKQGLIAYKIAAHAGDLAKGYPGAQMWDNAVSKARFEFRWEDQFRLAIDPDTAMAYHDETLPKENAKVAHFCSMCGPKFCSMKISQEVREFARLNPSTTTLAKAPGVIPIQQVSSGFEEKAEEFRKGGNEIYS</sequence>
<reference key="1">
    <citation type="journal article" date="2009" name="Environ. Microbiol.">
        <title>The genome of Polaromonas naphthalenivorans strain CJ2, isolated from coal tar-contaminated sediment, reveals physiological and metabolic versatility and evolution through extensive horizontal gene transfer.</title>
        <authorList>
            <person name="Yagi J.M."/>
            <person name="Sims D."/>
            <person name="Brettin T."/>
            <person name="Bruce D."/>
            <person name="Madsen E.L."/>
        </authorList>
    </citation>
    <scope>NUCLEOTIDE SEQUENCE [LARGE SCALE GENOMIC DNA]</scope>
    <source>
        <strain>CJ2</strain>
    </source>
</reference>
<organism>
    <name type="scientific">Polaromonas naphthalenivorans (strain CJ2)</name>
    <dbReference type="NCBI Taxonomy" id="365044"/>
    <lineage>
        <taxon>Bacteria</taxon>
        <taxon>Pseudomonadati</taxon>
        <taxon>Pseudomonadota</taxon>
        <taxon>Betaproteobacteria</taxon>
        <taxon>Burkholderiales</taxon>
        <taxon>Comamonadaceae</taxon>
        <taxon>Polaromonas</taxon>
    </lineage>
</organism>
<name>THIC_POLNA</name>
<accession>A1VI67</accession>
<protein>
    <recommendedName>
        <fullName evidence="1">Phosphomethylpyrimidine synthase</fullName>
        <ecNumber evidence="1">4.1.99.17</ecNumber>
    </recommendedName>
    <alternativeName>
        <fullName evidence="1">Hydroxymethylpyrimidine phosphate synthase</fullName>
        <shortName evidence="1">HMP-P synthase</shortName>
        <shortName evidence="1">HMP-phosphate synthase</shortName>
        <shortName evidence="1">HMPP synthase</shortName>
    </alternativeName>
    <alternativeName>
        <fullName evidence="1">Thiamine biosynthesis protein ThiC</fullName>
    </alternativeName>
</protein>
<gene>
    <name evidence="1" type="primary">thiC</name>
    <name type="ordered locus">Pnap_0019</name>
</gene>
<feature type="chain" id="PRO_1000093220" description="Phosphomethylpyrimidine synthase">
    <location>
        <begin position="1"/>
        <end position="638"/>
    </location>
</feature>
<feature type="binding site" evidence="1">
    <location>
        <position position="235"/>
    </location>
    <ligand>
        <name>substrate</name>
    </ligand>
</feature>
<feature type="binding site" evidence="1">
    <location>
        <position position="264"/>
    </location>
    <ligand>
        <name>substrate</name>
    </ligand>
</feature>
<feature type="binding site" evidence="1">
    <location>
        <position position="293"/>
    </location>
    <ligand>
        <name>substrate</name>
    </ligand>
</feature>
<feature type="binding site" evidence="1">
    <location>
        <position position="329"/>
    </location>
    <ligand>
        <name>substrate</name>
    </ligand>
</feature>
<feature type="binding site" evidence="1">
    <location>
        <begin position="349"/>
        <end position="351"/>
    </location>
    <ligand>
        <name>substrate</name>
    </ligand>
</feature>
<feature type="binding site" evidence="1">
    <location>
        <begin position="390"/>
        <end position="393"/>
    </location>
    <ligand>
        <name>substrate</name>
    </ligand>
</feature>
<feature type="binding site" evidence="1">
    <location>
        <position position="429"/>
    </location>
    <ligand>
        <name>substrate</name>
    </ligand>
</feature>
<feature type="binding site" evidence="1">
    <location>
        <position position="433"/>
    </location>
    <ligand>
        <name>Zn(2+)</name>
        <dbReference type="ChEBI" id="CHEBI:29105"/>
    </ligand>
</feature>
<feature type="binding site" evidence="1">
    <location>
        <position position="456"/>
    </location>
    <ligand>
        <name>substrate</name>
    </ligand>
</feature>
<feature type="binding site" evidence="1">
    <location>
        <position position="497"/>
    </location>
    <ligand>
        <name>Zn(2+)</name>
        <dbReference type="ChEBI" id="CHEBI:29105"/>
    </ligand>
</feature>
<feature type="binding site" evidence="1">
    <location>
        <position position="577"/>
    </location>
    <ligand>
        <name>[4Fe-4S] cluster</name>
        <dbReference type="ChEBI" id="CHEBI:49883"/>
        <note>4Fe-4S-S-AdoMet</note>
    </ligand>
</feature>
<feature type="binding site" evidence="1">
    <location>
        <position position="580"/>
    </location>
    <ligand>
        <name>[4Fe-4S] cluster</name>
        <dbReference type="ChEBI" id="CHEBI:49883"/>
        <note>4Fe-4S-S-AdoMet</note>
    </ligand>
</feature>
<feature type="binding site" evidence="1">
    <location>
        <position position="585"/>
    </location>
    <ligand>
        <name>[4Fe-4S] cluster</name>
        <dbReference type="ChEBI" id="CHEBI:49883"/>
        <note>4Fe-4S-S-AdoMet</note>
    </ligand>
</feature>
<comment type="function">
    <text evidence="1">Catalyzes the synthesis of the hydroxymethylpyrimidine phosphate (HMP-P) moiety of thiamine from aminoimidazole ribotide (AIR) in a radical S-adenosyl-L-methionine (SAM)-dependent reaction.</text>
</comment>
<comment type="catalytic activity">
    <reaction evidence="1">
        <text>5-amino-1-(5-phospho-beta-D-ribosyl)imidazole + S-adenosyl-L-methionine = 4-amino-2-methyl-5-(phosphooxymethyl)pyrimidine + CO + 5'-deoxyadenosine + formate + L-methionine + 3 H(+)</text>
        <dbReference type="Rhea" id="RHEA:24840"/>
        <dbReference type="ChEBI" id="CHEBI:15378"/>
        <dbReference type="ChEBI" id="CHEBI:15740"/>
        <dbReference type="ChEBI" id="CHEBI:17245"/>
        <dbReference type="ChEBI" id="CHEBI:17319"/>
        <dbReference type="ChEBI" id="CHEBI:57844"/>
        <dbReference type="ChEBI" id="CHEBI:58354"/>
        <dbReference type="ChEBI" id="CHEBI:59789"/>
        <dbReference type="ChEBI" id="CHEBI:137981"/>
        <dbReference type="EC" id="4.1.99.17"/>
    </reaction>
</comment>
<comment type="cofactor">
    <cofactor evidence="1">
        <name>[4Fe-4S] cluster</name>
        <dbReference type="ChEBI" id="CHEBI:49883"/>
    </cofactor>
    <text evidence="1">Binds 1 [4Fe-4S] cluster per subunit. The cluster is coordinated with 3 cysteines and an exchangeable S-adenosyl-L-methionine.</text>
</comment>
<comment type="pathway">
    <text evidence="1">Cofactor biosynthesis; thiamine diphosphate biosynthesis.</text>
</comment>
<comment type="subunit">
    <text evidence="1">Homodimer.</text>
</comment>
<comment type="similarity">
    <text evidence="1">Belongs to the ThiC family.</text>
</comment>
<evidence type="ECO:0000255" key="1">
    <source>
        <dbReference type="HAMAP-Rule" id="MF_00089"/>
    </source>
</evidence>
<dbReference type="EC" id="4.1.99.17" evidence="1"/>
<dbReference type="EMBL" id="CP000529">
    <property type="protein sequence ID" value="ABM35345.1"/>
    <property type="molecule type" value="Genomic_DNA"/>
</dbReference>
<dbReference type="RefSeq" id="WP_011799455.1">
    <property type="nucleotide sequence ID" value="NC_008781.1"/>
</dbReference>
<dbReference type="SMR" id="A1VI67"/>
<dbReference type="STRING" id="365044.Pnap_0019"/>
<dbReference type="KEGG" id="pna:Pnap_0019"/>
<dbReference type="eggNOG" id="COG0422">
    <property type="taxonomic scope" value="Bacteria"/>
</dbReference>
<dbReference type="HOGENOM" id="CLU_013181_2_1_4"/>
<dbReference type="UniPathway" id="UPA00060"/>
<dbReference type="Proteomes" id="UP000000644">
    <property type="component" value="Chromosome"/>
</dbReference>
<dbReference type="GO" id="GO:0005829">
    <property type="term" value="C:cytosol"/>
    <property type="evidence" value="ECO:0007669"/>
    <property type="project" value="TreeGrafter"/>
</dbReference>
<dbReference type="GO" id="GO:0051539">
    <property type="term" value="F:4 iron, 4 sulfur cluster binding"/>
    <property type="evidence" value="ECO:0007669"/>
    <property type="project" value="UniProtKB-KW"/>
</dbReference>
<dbReference type="GO" id="GO:0016830">
    <property type="term" value="F:carbon-carbon lyase activity"/>
    <property type="evidence" value="ECO:0007669"/>
    <property type="project" value="InterPro"/>
</dbReference>
<dbReference type="GO" id="GO:0008270">
    <property type="term" value="F:zinc ion binding"/>
    <property type="evidence" value="ECO:0007669"/>
    <property type="project" value="UniProtKB-UniRule"/>
</dbReference>
<dbReference type="GO" id="GO:0009228">
    <property type="term" value="P:thiamine biosynthetic process"/>
    <property type="evidence" value="ECO:0007669"/>
    <property type="project" value="UniProtKB-KW"/>
</dbReference>
<dbReference type="GO" id="GO:0009229">
    <property type="term" value="P:thiamine diphosphate biosynthetic process"/>
    <property type="evidence" value="ECO:0007669"/>
    <property type="project" value="UniProtKB-UniRule"/>
</dbReference>
<dbReference type="FunFam" id="3.20.20.540:FF:000001">
    <property type="entry name" value="Phosphomethylpyrimidine synthase"/>
    <property type="match status" value="1"/>
</dbReference>
<dbReference type="Gene3D" id="6.10.250.620">
    <property type="match status" value="1"/>
</dbReference>
<dbReference type="Gene3D" id="3.20.20.540">
    <property type="entry name" value="Radical SAM ThiC family, central domain"/>
    <property type="match status" value="1"/>
</dbReference>
<dbReference type="HAMAP" id="MF_00089">
    <property type="entry name" value="ThiC"/>
    <property type="match status" value="1"/>
</dbReference>
<dbReference type="InterPro" id="IPR037509">
    <property type="entry name" value="ThiC"/>
</dbReference>
<dbReference type="InterPro" id="IPR025747">
    <property type="entry name" value="ThiC-associated_dom"/>
</dbReference>
<dbReference type="InterPro" id="IPR038521">
    <property type="entry name" value="ThiC/Bza_core_dom"/>
</dbReference>
<dbReference type="InterPro" id="IPR002817">
    <property type="entry name" value="ThiC/BzaA/B"/>
</dbReference>
<dbReference type="NCBIfam" id="NF006763">
    <property type="entry name" value="PRK09284.1"/>
    <property type="match status" value="1"/>
</dbReference>
<dbReference type="NCBIfam" id="NF009895">
    <property type="entry name" value="PRK13352.1"/>
    <property type="match status" value="1"/>
</dbReference>
<dbReference type="NCBIfam" id="TIGR00190">
    <property type="entry name" value="thiC"/>
    <property type="match status" value="1"/>
</dbReference>
<dbReference type="PANTHER" id="PTHR30557:SF1">
    <property type="entry name" value="PHOSPHOMETHYLPYRIMIDINE SYNTHASE, CHLOROPLASTIC"/>
    <property type="match status" value="1"/>
</dbReference>
<dbReference type="PANTHER" id="PTHR30557">
    <property type="entry name" value="THIAMINE BIOSYNTHESIS PROTEIN THIC"/>
    <property type="match status" value="1"/>
</dbReference>
<dbReference type="Pfam" id="PF13667">
    <property type="entry name" value="ThiC-associated"/>
    <property type="match status" value="1"/>
</dbReference>
<dbReference type="Pfam" id="PF01964">
    <property type="entry name" value="ThiC_Rad_SAM"/>
    <property type="match status" value="1"/>
</dbReference>
<dbReference type="SFLD" id="SFLDF00407">
    <property type="entry name" value="phosphomethylpyrimidine_syntha"/>
    <property type="match status" value="1"/>
</dbReference>
<dbReference type="SFLD" id="SFLDG01114">
    <property type="entry name" value="phosphomethylpyrimidine_syntha"/>
    <property type="match status" value="1"/>
</dbReference>
<dbReference type="SFLD" id="SFLDS00113">
    <property type="entry name" value="Radical_SAM_Phosphomethylpyrim"/>
    <property type="match status" value="1"/>
</dbReference>